<organism>
    <name type="scientific">Mycobacterium bovis (strain BCG / Pasteur 1173P2)</name>
    <dbReference type="NCBI Taxonomy" id="410289"/>
    <lineage>
        <taxon>Bacteria</taxon>
        <taxon>Bacillati</taxon>
        <taxon>Actinomycetota</taxon>
        <taxon>Actinomycetes</taxon>
        <taxon>Mycobacteriales</taxon>
        <taxon>Mycobacteriaceae</taxon>
        <taxon>Mycobacterium</taxon>
        <taxon>Mycobacterium tuberculosis complex</taxon>
    </lineage>
</organism>
<keyword id="KW-0963">Cytoplasm</keyword>
<keyword id="KW-0460">Magnesium</keyword>
<keyword id="KW-0479">Metal-binding</keyword>
<keyword id="KW-0566">Pantothenate biosynthesis</keyword>
<keyword id="KW-0808">Transferase</keyword>
<evidence type="ECO:0000255" key="1">
    <source>
        <dbReference type="HAMAP-Rule" id="MF_00156"/>
    </source>
</evidence>
<evidence type="ECO:0000256" key="2">
    <source>
        <dbReference type="SAM" id="MobiDB-lite"/>
    </source>
</evidence>
<name>PANB_MYCBP</name>
<sequence>MSEQTIYGANTPGGSGPRTKIRTHHLQRWKADGHKWAMLTAYDYSTARIFDEAGIPVLLVGDSAANVVYGYDTTVPISIDELIPLVRGVVRGAPHALVVADLPFGSYEAGPTAALAAATRFLKDGGAHAVKLEGGERVAEQIACLTAAGIPVMAHIGFTPQSVNTLGGFRVQGRGDAAEQTIADAIAVAEAGAFAVVMEMVPAELATQITGKLTIPTVGIGAGPNCDGQVLVWQDMAGFSGAKTARFVKRYADVGGELRRAAMQYAQEVAGGVFPADEHSF</sequence>
<comment type="function">
    <text evidence="1">Catalyzes the reversible reaction in which hydroxymethyl group from 5,10-methylenetetrahydrofolate is transferred onto alpha-ketoisovalerate to form ketopantoate.</text>
</comment>
<comment type="catalytic activity">
    <reaction evidence="1">
        <text>3-methyl-2-oxobutanoate + (6R)-5,10-methylene-5,6,7,8-tetrahydrofolate + H2O = 2-dehydropantoate + (6S)-5,6,7,8-tetrahydrofolate</text>
        <dbReference type="Rhea" id="RHEA:11824"/>
        <dbReference type="ChEBI" id="CHEBI:11561"/>
        <dbReference type="ChEBI" id="CHEBI:11851"/>
        <dbReference type="ChEBI" id="CHEBI:15377"/>
        <dbReference type="ChEBI" id="CHEBI:15636"/>
        <dbReference type="ChEBI" id="CHEBI:57453"/>
        <dbReference type="EC" id="2.1.2.11"/>
    </reaction>
</comment>
<comment type="cofactor">
    <cofactor evidence="1">
        <name>Mg(2+)</name>
        <dbReference type="ChEBI" id="CHEBI:18420"/>
    </cofactor>
    <text evidence="1">Binds 1 Mg(2+) ion per subunit.</text>
</comment>
<comment type="pathway">
    <text evidence="1">Cofactor biosynthesis; (R)-pantothenate biosynthesis; (R)-pantoate from 3-methyl-2-oxobutanoate: step 1/2.</text>
</comment>
<comment type="subunit">
    <text evidence="1">Homodecamer; pentamer of dimers.</text>
</comment>
<comment type="subcellular location">
    <subcellularLocation>
        <location evidence="1">Cytoplasm</location>
    </subcellularLocation>
</comment>
<comment type="similarity">
    <text evidence="1">Belongs to the PanB family.</text>
</comment>
<protein>
    <recommendedName>
        <fullName evidence="1">3-methyl-2-oxobutanoate hydroxymethyltransferase</fullName>
        <ecNumber evidence="1">2.1.2.11</ecNumber>
    </recommendedName>
    <alternativeName>
        <fullName evidence="1">Ketopantoate hydroxymethyltransferase</fullName>
        <shortName evidence="1">KPHMT</shortName>
    </alternativeName>
</protein>
<dbReference type="EC" id="2.1.2.11" evidence="1"/>
<dbReference type="EMBL" id="U57435">
    <property type="protein sequence ID" value="AAB01232.1"/>
    <property type="molecule type" value="Genomic_DNA"/>
</dbReference>
<dbReference type="EMBL" id="AM408590">
    <property type="protein sequence ID" value="CAL72230.1"/>
    <property type="molecule type" value="Genomic_DNA"/>
</dbReference>
<dbReference type="RefSeq" id="WP_003411489.1">
    <property type="nucleotide sequence ID" value="NC_008769.1"/>
</dbReference>
<dbReference type="SMR" id="A1KKR8"/>
<dbReference type="KEGG" id="mbb:BCG_2242"/>
<dbReference type="HOGENOM" id="CLU_036645_1_0_11"/>
<dbReference type="UniPathway" id="UPA00028">
    <property type="reaction ID" value="UER00003"/>
</dbReference>
<dbReference type="Proteomes" id="UP000001472">
    <property type="component" value="Chromosome"/>
</dbReference>
<dbReference type="GO" id="GO:0005737">
    <property type="term" value="C:cytoplasm"/>
    <property type="evidence" value="ECO:0007669"/>
    <property type="project" value="UniProtKB-SubCell"/>
</dbReference>
<dbReference type="GO" id="GO:0003864">
    <property type="term" value="F:3-methyl-2-oxobutanoate hydroxymethyltransferase activity"/>
    <property type="evidence" value="ECO:0007669"/>
    <property type="project" value="UniProtKB-UniRule"/>
</dbReference>
<dbReference type="GO" id="GO:0000287">
    <property type="term" value="F:magnesium ion binding"/>
    <property type="evidence" value="ECO:0007669"/>
    <property type="project" value="TreeGrafter"/>
</dbReference>
<dbReference type="GO" id="GO:0015940">
    <property type="term" value="P:pantothenate biosynthetic process"/>
    <property type="evidence" value="ECO:0007669"/>
    <property type="project" value="UniProtKB-UniRule"/>
</dbReference>
<dbReference type="CDD" id="cd06557">
    <property type="entry name" value="KPHMT-like"/>
    <property type="match status" value="1"/>
</dbReference>
<dbReference type="FunFam" id="3.20.20.60:FF:000003">
    <property type="entry name" value="3-methyl-2-oxobutanoate hydroxymethyltransferase"/>
    <property type="match status" value="1"/>
</dbReference>
<dbReference type="Gene3D" id="3.20.20.60">
    <property type="entry name" value="Phosphoenolpyruvate-binding domains"/>
    <property type="match status" value="1"/>
</dbReference>
<dbReference type="HAMAP" id="MF_00156">
    <property type="entry name" value="PanB"/>
    <property type="match status" value="1"/>
</dbReference>
<dbReference type="InterPro" id="IPR003700">
    <property type="entry name" value="Pantoate_hydroxy_MeTrfase"/>
</dbReference>
<dbReference type="InterPro" id="IPR015813">
    <property type="entry name" value="Pyrv/PenolPyrv_kinase-like_dom"/>
</dbReference>
<dbReference type="InterPro" id="IPR040442">
    <property type="entry name" value="Pyrv_kinase-like_dom_sf"/>
</dbReference>
<dbReference type="NCBIfam" id="TIGR00222">
    <property type="entry name" value="panB"/>
    <property type="match status" value="1"/>
</dbReference>
<dbReference type="NCBIfam" id="NF001452">
    <property type="entry name" value="PRK00311.1"/>
    <property type="match status" value="1"/>
</dbReference>
<dbReference type="PANTHER" id="PTHR20881">
    <property type="entry name" value="3-METHYL-2-OXOBUTANOATE HYDROXYMETHYLTRANSFERASE"/>
    <property type="match status" value="1"/>
</dbReference>
<dbReference type="PANTHER" id="PTHR20881:SF0">
    <property type="entry name" value="3-METHYL-2-OXOBUTANOATE HYDROXYMETHYLTRANSFERASE"/>
    <property type="match status" value="1"/>
</dbReference>
<dbReference type="Pfam" id="PF02548">
    <property type="entry name" value="Pantoate_transf"/>
    <property type="match status" value="1"/>
</dbReference>
<dbReference type="PIRSF" id="PIRSF000388">
    <property type="entry name" value="Pantoate_hydroxy_MeTrfase"/>
    <property type="match status" value="1"/>
</dbReference>
<dbReference type="SUPFAM" id="SSF51621">
    <property type="entry name" value="Phosphoenolpyruvate/pyruvate domain"/>
    <property type="match status" value="1"/>
</dbReference>
<feature type="chain" id="PRO_0000285180" description="3-methyl-2-oxobutanoate hydroxymethyltransferase">
    <location>
        <begin position="1"/>
        <end position="281"/>
    </location>
</feature>
<feature type="region of interest" description="Disordered" evidence="2">
    <location>
        <begin position="1"/>
        <end position="20"/>
    </location>
</feature>
<feature type="active site" description="Proton acceptor" evidence="1">
    <location>
        <position position="199"/>
    </location>
</feature>
<feature type="binding site" evidence="1">
    <location>
        <begin position="62"/>
        <end position="63"/>
    </location>
    <ligand>
        <name>3-methyl-2-oxobutanoate</name>
        <dbReference type="ChEBI" id="CHEBI:11851"/>
    </ligand>
</feature>
<feature type="binding site" evidence="1">
    <location>
        <position position="62"/>
    </location>
    <ligand>
        <name>Mg(2+)</name>
        <dbReference type="ChEBI" id="CHEBI:18420"/>
    </ligand>
</feature>
<feature type="binding site" evidence="1">
    <location>
        <position position="101"/>
    </location>
    <ligand>
        <name>3-methyl-2-oxobutanoate</name>
        <dbReference type="ChEBI" id="CHEBI:11851"/>
    </ligand>
</feature>
<feature type="binding site" evidence="1">
    <location>
        <position position="101"/>
    </location>
    <ligand>
        <name>Mg(2+)</name>
        <dbReference type="ChEBI" id="CHEBI:18420"/>
    </ligand>
</feature>
<feature type="binding site" evidence="1">
    <location>
        <position position="131"/>
    </location>
    <ligand>
        <name>3-methyl-2-oxobutanoate</name>
        <dbReference type="ChEBI" id="CHEBI:11851"/>
    </ligand>
</feature>
<feature type="binding site" evidence="1">
    <location>
        <position position="133"/>
    </location>
    <ligand>
        <name>Mg(2+)</name>
        <dbReference type="ChEBI" id="CHEBI:18420"/>
    </ligand>
</feature>
<gene>
    <name evidence="1" type="primary">panB</name>
    <name type="ordered locus">BCG_2242</name>
</gene>
<proteinExistence type="inferred from homology"/>
<reference key="1">
    <citation type="submission" date="1996-06" db="EMBL/GenBank/DDBJ databases">
        <title>Cloning and sequencing of panB gene of Mycobacterium bovis BCG and Mycobacterium tuberculosis.</title>
        <authorList>
            <person name="Kim J."/>
            <person name="Kim S."/>
            <person name="Bai G."/>
            <person name="Park Y."/>
            <person name="Kang S."/>
            <person name="Kim Y."/>
            <person name="Kim C."/>
            <person name="Choe I."/>
            <person name="Chung T."/>
            <person name="Choe Y."/>
        </authorList>
    </citation>
    <scope>NUCLEOTIDE SEQUENCE [GENOMIC DNA]</scope>
</reference>
<reference key="2">
    <citation type="journal article" date="2007" name="Proc. Natl. Acad. Sci. U.S.A.">
        <title>Genome plasticity of BCG and impact on vaccine efficacy.</title>
        <authorList>
            <person name="Brosch R."/>
            <person name="Gordon S.V."/>
            <person name="Garnier T."/>
            <person name="Eiglmeier K."/>
            <person name="Frigui W."/>
            <person name="Valenti P."/>
            <person name="Dos Santos S."/>
            <person name="Duthoy S."/>
            <person name="Lacroix C."/>
            <person name="Garcia-Pelayo C."/>
            <person name="Inwald J.K."/>
            <person name="Golby P."/>
            <person name="Garcia J.N."/>
            <person name="Hewinson R.G."/>
            <person name="Behr M.A."/>
            <person name="Quail M.A."/>
            <person name="Churcher C."/>
            <person name="Barrell B.G."/>
            <person name="Parkhill J."/>
            <person name="Cole S.T."/>
        </authorList>
    </citation>
    <scope>NUCLEOTIDE SEQUENCE [LARGE SCALE GENOMIC DNA]</scope>
    <source>
        <strain>BCG / Pasteur 1173P2</strain>
    </source>
</reference>
<accession>A1KKR8</accession>
<accession>P0A5Q9</accession>
<accession>Q10505</accession>